<sequence length="183" mass="20756">MENLIEEILKQIGEDPNREGLVKTPNRVKKAYDFLTSGYKADINQLVNGAIFEENTTGMVLVRDIEMYSLCEHHLLPFYGRAHVAYIPNKKIIGISKIPRIVDVFARRLQVQERLTDQIAQAIQETLDPLGVGVVIKAKHLCMMMRGVEKQNSELFTSSLLGLFKTDPTTRSEFLDLIRTGSH</sequence>
<proteinExistence type="inferred from homology"/>
<name>GCH1_LEPBA</name>
<keyword id="KW-0342">GTP-binding</keyword>
<keyword id="KW-0378">Hydrolase</keyword>
<keyword id="KW-0479">Metal-binding</keyword>
<keyword id="KW-0547">Nucleotide-binding</keyword>
<keyword id="KW-0554">One-carbon metabolism</keyword>
<keyword id="KW-0862">Zinc</keyword>
<feature type="chain" id="PRO_1000100180" description="GTP cyclohydrolase 1">
    <location>
        <begin position="1"/>
        <end position="183"/>
    </location>
</feature>
<feature type="binding site" evidence="1">
    <location>
        <position position="71"/>
    </location>
    <ligand>
        <name>Zn(2+)</name>
        <dbReference type="ChEBI" id="CHEBI:29105"/>
    </ligand>
</feature>
<feature type="binding site" evidence="1">
    <location>
        <position position="74"/>
    </location>
    <ligand>
        <name>Zn(2+)</name>
        <dbReference type="ChEBI" id="CHEBI:29105"/>
    </ligand>
</feature>
<feature type="binding site" evidence="1">
    <location>
        <position position="142"/>
    </location>
    <ligand>
        <name>Zn(2+)</name>
        <dbReference type="ChEBI" id="CHEBI:29105"/>
    </ligand>
</feature>
<comment type="catalytic activity">
    <reaction evidence="1">
        <text>GTP + H2O = 7,8-dihydroneopterin 3'-triphosphate + formate + H(+)</text>
        <dbReference type="Rhea" id="RHEA:17473"/>
        <dbReference type="ChEBI" id="CHEBI:15377"/>
        <dbReference type="ChEBI" id="CHEBI:15378"/>
        <dbReference type="ChEBI" id="CHEBI:15740"/>
        <dbReference type="ChEBI" id="CHEBI:37565"/>
        <dbReference type="ChEBI" id="CHEBI:58462"/>
        <dbReference type="EC" id="3.5.4.16"/>
    </reaction>
</comment>
<comment type="pathway">
    <text evidence="1">Cofactor biosynthesis; 7,8-dihydroneopterin triphosphate biosynthesis; 7,8-dihydroneopterin triphosphate from GTP: step 1/1.</text>
</comment>
<comment type="subunit">
    <text evidence="1">Homomer.</text>
</comment>
<comment type="similarity">
    <text evidence="1">Belongs to the GTP cyclohydrolase I family.</text>
</comment>
<protein>
    <recommendedName>
        <fullName evidence="1">GTP cyclohydrolase 1</fullName>
        <ecNumber evidence="1">3.5.4.16</ecNumber>
    </recommendedName>
    <alternativeName>
        <fullName evidence="1">GTP cyclohydrolase I</fullName>
        <shortName evidence="1">GTP-CH-I</shortName>
    </alternativeName>
</protein>
<accession>B0S8X8</accession>
<reference key="1">
    <citation type="journal article" date="2008" name="PLoS ONE">
        <title>Genome sequence of the saprophyte Leptospira biflexa provides insights into the evolution of Leptospira and the pathogenesis of leptospirosis.</title>
        <authorList>
            <person name="Picardeau M."/>
            <person name="Bulach D.M."/>
            <person name="Bouchier C."/>
            <person name="Zuerner R.L."/>
            <person name="Zidane N."/>
            <person name="Wilson P.J."/>
            <person name="Creno S."/>
            <person name="Kuczek E.S."/>
            <person name="Bommezzadri S."/>
            <person name="Davis J.C."/>
            <person name="McGrath A."/>
            <person name="Johnson M.J."/>
            <person name="Boursaux-Eude C."/>
            <person name="Seemann T."/>
            <person name="Rouy Z."/>
            <person name="Coppel R.L."/>
            <person name="Rood J.I."/>
            <person name="Lajus A."/>
            <person name="Davies J.K."/>
            <person name="Medigue C."/>
            <person name="Adler B."/>
        </authorList>
    </citation>
    <scope>NUCLEOTIDE SEQUENCE [LARGE SCALE GENOMIC DNA]</scope>
    <source>
        <strain>Patoc 1 / Ames</strain>
    </source>
</reference>
<organism>
    <name type="scientific">Leptospira biflexa serovar Patoc (strain Patoc 1 / Ames)</name>
    <dbReference type="NCBI Taxonomy" id="355278"/>
    <lineage>
        <taxon>Bacteria</taxon>
        <taxon>Pseudomonadati</taxon>
        <taxon>Spirochaetota</taxon>
        <taxon>Spirochaetia</taxon>
        <taxon>Leptospirales</taxon>
        <taxon>Leptospiraceae</taxon>
        <taxon>Leptospira</taxon>
    </lineage>
</organism>
<evidence type="ECO:0000255" key="1">
    <source>
        <dbReference type="HAMAP-Rule" id="MF_00223"/>
    </source>
</evidence>
<dbReference type="EC" id="3.5.4.16" evidence="1"/>
<dbReference type="EMBL" id="CP000777">
    <property type="protein sequence ID" value="ABZ95799.1"/>
    <property type="molecule type" value="Genomic_DNA"/>
</dbReference>
<dbReference type="RefSeq" id="WP_012390367.1">
    <property type="nucleotide sequence ID" value="NC_010842.1"/>
</dbReference>
<dbReference type="SMR" id="B0S8X8"/>
<dbReference type="KEGG" id="lbf:LBF_3333"/>
<dbReference type="HOGENOM" id="CLU_049768_3_1_12"/>
<dbReference type="UniPathway" id="UPA00848">
    <property type="reaction ID" value="UER00151"/>
</dbReference>
<dbReference type="GO" id="GO:0005737">
    <property type="term" value="C:cytoplasm"/>
    <property type="evidence" value="ECO:0007669"/>
    <property type="project" value="TreeGrafter"/>
</dbReference>
<dbReference type="GO" id="GO:0005525">
    <property type="term" value="F:GTP binding"/>
    <property type="evidence" value="ECO:0007669"/>
    <property type="project" value="UniProtKB-KW"/>
</dbReference>
<dbReference type="GO" id="GO:0003934">
    <property type="term" value="F:GTP cyclohydrolase I activity"/>
    <property type="evidence" value="ECO:0007669"/>
    <property type="project" value="UniProtKB-UniRule"/>
</dbReference>
<dbReference type="GO" id="GO:0008270">
    <property type="term" value="F:zinc ion binding"/>
    <property type="evidence" value="ECO:0007669"/>
    <property type="project" value="UniProtKB-UniRule"/>
</dbReference>
<dbReference type="GO" id="GO:0006730">
    <property type="term" value="P:one-carbon metabolic process"/>
    <property type="evidence" value="ECO:0007669"/>
    <property type="project" value="UniProtKB-UniRule"/>
</dbReference>
<dbReference type="GO" id="GO:0006729">
    <property type="term" value="P:tetrahydrobiopterin biosynthetic process"/>
    <property type="evidence" value="ECO:0007669"/>
    <property type="project" value="TreeGrafter"/>
</dbReference>
<dbReference type="GO" id="GO:0046654">
    <property type="term" value="P:tetrahydrofolate biosynthetic process"/>
    <property type="evidence" value="ECO:0007669"/>
    <property type="project" value="UniProtKB-UniRule"/>
</dbReference>
<dbReference type="CDD" id="cd00642">
    <property type="entry name" value="GTP_cyclohydro1"/>
    <property type="match status" value="1"/>
</dbReference>
<dbReference type="FunFam" id="3.30.1130.10:FF:000001">
    <property type="entry name" value="GTP cyclohydrolase 1"/>
    <property type="match status" value="1"/>
</dbReference>
<dbReference type="Gene3D" id="1.10.286.10">
    <property type="match status" value="1"/>
</dbReference>
<dbReference type="Gene3D" id="3.30.1130.10">
    <property type="match status" value="1"/>
</dbReference>
<dbReference type="HAMAP" id="MF_00223">
    <property type="entry name" value="FolE"/>
    <property type="match status" value="1"/>
</dbReference>
<dbReference type="InterPro" id="IPR043133">
    <property type="entry name" value="GTP-CH-I_C/QueF"/>
</dbReference>
<dbReference type="InterPro" id="IPR043134">
    <property type="entry name" value="GTP-CH-I_N"/>
</dbReference>
<dbReference type="InterPro" id="IPR001474">
    <property type="entry name" value="GTP_CycHdrlase_I"/>
</dbReference>
<dbReference type="InterPro" id="IPR018234">
    <property type="entry name" value="GTP_CycHdrlase_I_CS"/>
</dbReference>
<dbReference type="InterPro" id="IPR020602">
    <property type="entry name" value="GTP_CycHdrlase_I_dom"/>
</dbReference>
<dbReference type="NCBIfam" id="TIGR00063">
    <property type="entry name" value="folE"/>
    <property type="match status" value="1"/>
</dbReference>
<dbReference type="NCBIfam" id="NF006825">
    <property type="entry name" value="PRK09347.1-2"/>
    <property type="match status" value="1"/>
</dbReference>
<dbReference type="NCBIfam" id="NF006826">
    <property type="entry name" value="PRK09347.1-3"/>
    <property type="match status" value="1"/>
</dbReference>
<dbReference type="PANTHER" id="PTHR11109:SF7">
    <property type="entry name" value="GTP CYCLOHYDROLASE 1"/>
    <property type="match status" value="1"/>
</dbReference>
<dbReference type="PANTHER" id="PTHR11109">
    <property type="entry name" value="GTP CYCLOHYDROLASE I"/>
    <property type="match status" value="1"/>
</dbReference>
<dbReference type="Pfam" id="PF01227">
    <property type="entry name" value="GTP_cyclohydroI"/>
    <property type="match status" value="1"/>
</dbReference>
<dbReference type="SUPFAM" id="SSF55620">
    <property type="entry name" value="Tetrahydrobiopterin biosynthesis enzymes-like"/>
    <property type="match status" value="1"/>
</dbReference>
<dbReference type="PROSITE" id="PS00859">
    <property type="entry name" value="GTP_CYCLOHYDROL_1_1"/>
    <property type="match status" value="1"/>
</dbReference>
<dbReference type="PROSITE" id="PS00860">
    <property type="entry name" value="GTP_CYCLOHYDROL_1_2"/>
    <property type="match status" value="1"/>
</dbReference>
<gene>
    <name evidence="1" type="primary">folE</name>
    <name type="ordered locus">LBF_3333</name>
</gene>